<reference key="1">
    <citation type="journal article" date="2003" name="Nat. Genet.">
        <title>Heterozygous mutations of the kinesin KIF21A in congenital fibrosis of the extraocular muscles type 1 (CFEOM1).</title>
        <authorList>
            <person name="Yamada K."/>
            <person name="Andrews C."/>
            <person name="Chan W.M."/>
            <person name="McKeown C.A."/>
            <person name="Magli A."/>
            <person name="De Berardinis T."/>
            <person name="Loewenstein A."/>
            <person name="Lazar M."/>
            <person name="O'Keefe M."/>
            <person name="Letson R."/>
            <person name="London A."/>
            <person name="Ruttum M."/>
            <person name="Matsumoto N."/>
            <person name="Saito N."/>
            <person name="Morris L."/>
            <person name="Monte M.D."/>
            <person name="Johnson R.H."/>
            <person name="Uyama E."/>
            <person name="Houtman W.A."/>
            <person name="De Vries B."/>
            <person name="Carlow T.J."/>
            <person name="Hart B.L."/>
            <person name="Krawiecki N."/>
            <person name="Shoffner J."/>
            <person name="Vogel M.C."/>
            <person name="Katowitz J."/>
            <person name="Goldstein S.M."/>
            <person name="Levin A.V."/>
            <person name="Sener E.C."/>
            <person name="Ozturk B.T."/>
            <person name="Akarsu A.N."/>
            <person name="Brodsky M.C."/>
            <person name="Hanisch F."/>
            <person name="Cruse R.P."/>
            <person name="Zubcov A.A."/>
            <person name="Robb R.M."/>
            <person name="Roggenkaemper P."/>
            <person name="Gottlob I."/>
            <person name="Kowal L."/>
            <person name="Battu R."/>
            <person name="Traboulsi E.I."/>
            <person name="Franceschini P."/>
            <person name="Newlin A."/>
            <person name="Demer J.L."/>
            <person name="Engle E.C."/>
        </authorList>
    </citation>
    <scope>NUCLEOTIDE SEQUENCE [MRNA] (ISOFORM 1)</scope>
    <scope>VARIANTS CFEOM1 THR-356; ARG-947; VAL-947; GLN-954; TRP-954 AND THR-1010</scope>
</reference>
<reference key="2">
    <citation type="submission" date="2005-12" db="EMBL/GenBank/DDBJ databases">
        <title>Differential expression analysis of molecular motors in ALS motor neuron disease.</title>
        <authorList>
            <person name="Pantelidou M."/>
            <person name="Lederer C.W."/>
            <person name="Zographos S.E."/>
            <person name="Pfaffl M.W."/>
            <person name="Cavallaro S."/>
            <person name="Santama N."/>
        </authorList>
    </citation>
    <scope>NUCLEOTIDE SEQUENCE [MRNA] (ISOFORM 6)</scope>
    <source>
        <tissue>Brain cortex</tissue>
    </source>
</reference>
<reference key="3">
    <citation type="submission" date="2001-11" db="EMBL/GenBank/DDBJ databases">
        <authorList>
            <person name="Zan Q."/>
            <person name="Guo J.H."/>
            <person name="Yu L."/>
        </authorList>
    </citation>
    <scope>NUCLEOTIDE SEQUENCE [LARGE SCALE MRNA] (ISOFORM 2)</scope>
</reference>
<reference key="4">
    <citation type="submission" date="2007-01" db="EMBL/GenBank/DDBJ databases">
        <title>Multiplex amplification and cloning of 5'-ends of cDNA by ligase-free recombination: preparation of full-length cDNA clones encoding motor proteins.</title>
        <authorList>
            <person name="Yamakawa H."/>
            <person name="Kikuno R.F."/>
            <person name="Nagase T."/>
            <person name="Ohara O."/>
        </authorList>
    </citation>
    <scope>NUCLEOTIDE SEQUENCE [LARGE SCALE MRNA] (ISOFORM 2)</scope>
    <source>
        <tissue>Brain</tissue>
    </source>
</reference>
<reference key="5">
    <citation type="journal article" date="2006" name="Nature">
        <title>The finished DNA sequence of human chromosome 12.</title>
        <authorList>
            <person name="Scherer S.E."/>
            <person name="Muzny D.M."/>
            <person name="Buhay C.J."/>
            <person name="Chen R."/>
            <person name="Cree A."/>
            <person name="Ding Y."/>
            <person name="Dugan-Rocha S."/>
            <person name="Gill R."/>
            <person name="Gunaratne P."/>
            <person name="Harris R.A."/>
            <person name="Hawes A.C."/>
            <person name="Hernandez J."/>
            <person name="Hodgson A.V."/>
            <person name="Hume J."/>
            <person name="Jackson A."/>
            <person name="Khan Z.M."/>
            <person name="Kovar-Smith C."/>
            <person name="Lewis L.R."/>
            <person name="Lozado R.J."/>
            <person name="Metzker M.L."/>
            <person name="Milosavljevic A."/>
            <person name="Miner G.R."/>
            <person name="Montgomery K.T."/>
            <person name="Morgan M.B."/>
            <person name="Nazareth L.V."/>
            <person name="Scott G."/>
            <person name="Sodergren E."/>
            <person name="Song X.-Z."/>
            <person name="Steffen D."/>
            <person name="Lovering R.C."/>
            <person name="Wheeler D.A."/>
            <person name="Worley K.C."/>
            <person name="Yuan Y."/>
            <person name="Zhang Z."/>
            <person name="Adams C.Q."/>
            <person name="Ansari-Lari M.A."/>
            <person name="Ayele M."/>
            <person name="Brown M.J."/>
            <person name="Chen G."/>
            <person name="Chen Z."/>
            <person name="Clerc-Blankenburg K.P."/>
            <person name="Davis C."/>
            <person name="Delgado O."/>
            <person name="Dinh H.H."/>
            <person name="Draper H."/>
            <person name="Gonzalez-Garay M.L."/>
            <person name="Havlak P."/>
            <person name="Jackson L.R."/>
            <person name="Jacob L.S."/>
            <person name="Kelly S.H."/>
            <person name="Li L."/>
            <person name="Li Z."/>
            <person name="Liu J."/>
            <person name="Liu W."/>
            <person name="Lu J."/>
            <person name="Maheshwari M."/>
            <person name="Nguyen B.-V."/>
            <person name="Okwuonu G.O."/>
            <person name="Pasternak S."/>
            <person name="Perez L.M."/>
            <person name="Plopper F.J.H."/>
            <person name="Santibanez J."/>
            <person name="Shen H."/>
            <person name="Tabor P.E."/>
            <person name="Verduzco D."/>
            <person name="Waldron L."/>
            <person name="Wang Q."/>
            <person name="Williams G.A."/>
            <person name="Zhang J."/>
            <person name="Zhou J."/>
            <person name="Allen C.C."/>
            <person name="Amin A.G."/>
            <person name="Anyalebechi V."/>
            <person name="Bailey M."/>
            <person name="Barbaria J.A."/>
            <person name="Bimage K.E."/>
            <person name="Bryant N.P."/>
            <person name="Burch P.E."/>
            <person name="Burkett C.E."/>
            <person name="Burrell K.L."/>
            <person name="Calderon E."/>
            <person name="Cardenas V."/>
            <person name="Carter K."/>
            <person name="Casias K."/>
            <person name="Cavazos I."/>
            <person name="Cavazos S.R."/>
            <person name="Ceasar H."/>
            <person name="Chacko J."/>
            <person name="Chan S.N."/>
            <person name="Chavez D."/>
            <person name="Christopoulos C."/>
            <person name="Chu J."/>
            <person name="Cockrell R."/>
            <person name="Cox C.D."/>
            <person name="Dang M."/>
            <person name="Dathorne S.R."/>
            <person name="David R."/>
            <person name="Davis C.M."/>
            <person name="Davy-Carroll L."/>
            <person name="Deshazo D.R."/>
            <person name="Donlin J.E."/>
            <person name="D'Souza L."/>
            <person name="Eaves K.A."/>
            <person name="Egan A."/>
            <person name="Emery-Cohen A.J."/>
            <person name="Escotto M."/>
            <person name="Flagg N."/>
            <person name="Forbes L.D."/>
            <person name="Gabisi A.M."/>
            <person name="Garza M."/>
            <person name="Hamilton C."/>
            <person name="Henderson N."/>
            <person name="Hernandez O."/>
            <person name="Hines S."/>
            <person name="Hogues M.E."/>
            <person name="Huang M."/>
            <person name="Idlebird D.G."/>
            <person name="Johnson R."/>
            <person name="Jolivet A."/>
            <person name="Jones S."/>
            <person name="Kagan R."/>
            <person name="King L.M."/>
            <person name="Leal B."/>
            <person name="Lebow H."/>
            <person name="Lee S."/>
            <person name="LeVan J.M."/>
            <person name="Lewis L.C."/>
            <person name="London P."/>
            <person name="Lorensuhewa L.M."/>
            <person name="Loulseged H."/>
            <person name="Lovett D.A."/>
            <person name="Lucier A."/>
            <person name="Lucier R.L."/>
            <person name="Ma J."/>
            <person name="Madu R.C."/>
            <person name="Mapua P."/>
            <person name="Martindale A.D."/>
            <person name="Martinez E."/>
            <person name="Massey E."/>
            <person name="Mawhiney S."/>
            <person name="Meador M.G."/>
            <person name="Mendez S."/>
            <person name="Mercado C."/>
            <person name="Mercado I.C."/>
            <person name="Merritt C.E."/>
            <person name="Miner Z.L."/>
            <person name="Minja E."/>
            <person name="Mitchell T."/>
            <person name="Mohabbat F."/>
            <person name="Mohabbat K."/>
            <person name="Montgomery B."/>
            <person name="Moore N."/>
            <person name="Morris S."/>
            <person name="Munidasa M."/>
            <person name="Ngo R.N."/>
            <person name="Nguyen N.B."/>
            <person name="Nickerson E."/>
            <person name="Nwaokelemeh O.O."/>
            <person name="Nwokenkwo S."/>
            <person name="Obregon M."/>
            <person name="Oguh M."/>
            <person name="Oragunye N."/>
            <person name="Oviedo R.J."/>
            <person name="Parish B.J."/>
            <person name="Parker D.N."/>
            <person name="Parrish J."/>
            <person name="Parks K.L."/>
            <person name="Paul H.A."/>
            <person name="Payton B.A."/>
            <person name="Perez A."/>
            <person name="Perrin W."/>
            <person name="Pickens A."/>
            <person name="Primus E.L."/>
            <person name="Pu L.-L."/>
            <person name="Puazo M."/>
            <person name="Quiles M.M."/>
            <person name="Quiroz J.B."/>
            <person name="Rabata D."/>
            <person name="Reeves K."/>
            <person name="Ruiz S.J."/>
            <person name="Shao H."/>
            <person name="Sisson I."/>
            <person name="Sonaike T."/>
            <person name="Sorelle R.P."/>
            <person name="Sutton A.E."/>
            <person name="Svatek A.F."/>
            <person name="Svetz L.A."/>
            <person name="Tamerisa K.S."/>
            <person name="Taylor T.R."/>
            <person name="Teague B."/>
            <person name="Thomas N."/>
            <person name="Thorn R.D."/>
            <person name="Trejos Z.Y."/>
            <person name="Trevino B.K."/>
            <person name="Ukegbu O.N."/>
            <person name="Urban J.B."/>
            <person name="Vasquez L.I."/>
            <person name="Vera V.A."/>
            <person name="Villasana D.M."/>
            <person name="Wang L."/>
            <person name="Ward-Moore S."/>
            <person name="Warren J.T."/>
            <person name="Wei X."/>
            <person name="White F."/>
            <person name="Williamson A.L."/>
            <person name="Wleczyk R."/>
            <person name="Wooden H.S."/>
            <person name="Wooden S.H."/>
            <person name="Yen J."/>
            <person name="Yoon L."/>
            <person name="Yoon V."/>
            <person name="Zorrilla S.E."/>
            <person name="Nelson D."/>
            <person name="Kucherlapati R."/>
            <person name="Weinstock G."/>
            <person name="Gibbs R.A."/>
        </authorList>
    </citation>
    <scope>NUCLEOTIDE SEQUENCE [LARGE SCALE GENOMIC DNA]</scope>
</reference>
<reference key="6">
    <citation type="submission" date="2005-07" db="EMBL/GenBank/DDBJ databases">
        <authorList>
            <person name="Mural R.J."/>
            <person name="Istrail S."/>
            <person name="Sutton G.G."/>
            <person name="Florea L."/>
            <person name="Halpern A.L."/>
            <person name="Mobarry C.M."/>
            <person name="Lippert R."/>
            <person name="Walenz B."/>
            <person name="Shatkay H."/>
            <person name="Dew I."/>
            <person name="Miller J.R."/>
            <person name="Flanigan M.J."/>
            <person name="Edwards N.J."/>
            <person name="Bolanos R."/>
            <person name="Fasulo D."/>
            <person name="Halldorsson B.V."/>
            <person name="Hannenhalli S."/>
            <person name="Turner R."/>
            <person name="Yooseph S."/>
            <person name="Lu F."/>
            <person name="Nusskern D.R."/>
            <person name="Shue B.C."/>
            <person name="Zheng X.H."/>
            <person name="Zhong F."/>
            <person name="Delcher A.L."/>
            <person name="Huson D.H."/>
            <person name="Kravitz S.A."/>
            <person name="Mouchard L."/>
            <person name="Reinert K."/>
            <person name="Remington K.A."/>
            <person name="Clark A.G."/>
            <person name="Waterman M.S."/>
            <person name="Eichler E.E."/>
            <person name="Adams M.D."/>
            <person name="Hunkapiller M.W."/>
            <person name="Myers E.W."/>
            <person name="Venter J.C."/>
        </authorList>
    </citation>
    <scope>NUCLEOTIDE SEQUENCE [LARGE SCALE GENOMIC DNA]</scope>
</reference>
<reference key="7">
    <citation type="journal article" date="2004" name="Genome Res.">
        <title>The status, quality, and expansion of the NIH full-length cDNA project: the Mammalian Gene Collection (MGC).</title>
        <authorList>
            <consortium name="The MGC Project Team"/>
        </authorList>
    </citation>
    <scope>NUCLEOTIDE SEQUENCE [LARGE SCALE MRNA] (ISOFORM 5)</scope>
    <scope>NUCLEOTIDE SEQUENCE [LARGE SCALE MRNA] OF 1-543 (ISOFORMS 1/2)</scope>
    <scope>NUCLEOTIDE SEQUENCE [LARGE SCALE MRNA] OF 1243-1674 (ISOFORM 4)</scope>
    <source>
        <tissue>Adrenal cortex</tissue>
        <tissue>Brain</tissue>
        <tissue>Testis</tissue>
    </source>
</reference>
<reference key="8">
    <citation type="journal article" date="1999" name="Int. J. Cancer">
        <title>Antigens recognized by autologous antibody in patients with renal-cell carcinoma.</title>
        <authorList>
            <person name="Scanlan M.J."/>
            <person name="Gordan J.D."/>
            <person name="Williamson B."/>
            <person name="Stockert E."/>
            <person name="Bander N.H."/>
            <person name="Jongeneel C.V."/>
            <person name="Gure A.O."/>
            <person name="Jaeger D."/>
            <person name="Jaeger E."/>
            <person name="Knuth A."/>
            <person name="Chen Y.-T."/>
            <person name="Old L.J."/>
        </authorList>
    </citation>
    <scope>NUCLEOTIDE SEQUENCE [MRNA] OF 1-597 (ISOFORM 2)</scope>
    <scope>IDENTIFICATION AS A RENAL CANCER ANTIGEN</scope>
</reference>
<reference key="9">
    <citation type="journal article" date="2004" name="Nat. Genet.">
        <title>Complete sequencing and characterization of 21,243 full-length human cDNAs.</title>
        <authorList>
            <person name="Ota T."/>
            <person name="Suzuki Y."/>
            <person name="Nishikawa T."/>
            <person name="Otsuki T."/>
            <person name="Sugiyama T."/>
            <person name="Irie R."/>
            <person name="Wakamatsu A."/>
            <person name="Hayashi K."/>
            <person name="Sato H."/>
            <person name="Nagai K."/>
            <person name="Kimura K."/>
            <person name="Makita H."/>
            <person name="Sekine M."/>
            <person name="Obayashi M."/>
            <person name="Nishi T."/>
            <person name="Shibahara T."/>
            <person name="Tanaka T."/>
            <person name="Ishii S."/>
            <person name="Yamamoto J."/>
            <person name="Saito K."/>
            <person name="Kawai Y."/>
            <person name="Isono Y."/>
            <person name="Nakamura Y."/>
            <person name="Nagahari K."/>
            <person name="Murakami K."/>
            <person name="Yasuda T."/>
            <person name="Iwayanagi T."/>
            <person name="Wagatsuma M."/>
            <person name="Shiratori A."/>
            <person name="Sudo H."/>
            <person name="Hosoiri T."/>
            <person name="Kaku Y."/>
            <person name="Kodaira H."/>
            <person name="Kondo H."/>
            <person name="Sugawara M."/>
            <person name="Takahashi M."/>
            <person name="Kanda K."/>
            <person name="Yokoi T."/>
            <person name="Furuya T."/>
            <person name="Kikkawa E."/>
            <person name="Omura Y."/>
            <person name="Abe K."/>
            <person name="Kamihara K."/>
            <person name="Katsuta N."/>
            <person name="Sato K."/>
            <person name="Tanikawa M."/>
            <person name="Yamazaki M."/>
            <person name="Ninomiya K."/>
            <person name="Ishibashi T."/>
            <person name="Yamashita H."/>
            <person name="Murakawa K."/>
            <person name="Fujimori K."/>
            <person name="Tanai H."/>
            <person name="Kimata M."/>
            <person name="Watanabe M."/>
            <person name="Hiraoka S."/>
            <person name="Chiba Y."/>
            <person name="Ishida S."/>
            <person name="Ono Y."/>
            <person name="Takiguchi S."/>
            <person name="Watanabe S."/>
            <person name="Yosida M."/>
            <person name="Hotuta T."/>
            <person name="Kusano J."/>
            <person name="Kanehori K."/>
            <person name="Takahashi-Fujii A."/>
            <person name="Hara H."/>
            <person name="Tanase T.-O."/>
            <person name="Nomura Y."/>
            <person name="Togiya S."/>
            <person name="Komai F."/>
            <person name="Hara R."/>
            <person name="Takeuchi K."/>
            <person name="Arita M."/>
            <person name="Imose N."/>
            <person name="Musashino K."/>
            <person name="Yuuki H."/>
            <person name="Oshima A."/>
            <person name="Sasaki N."/>
            <person name="Aotsuka S."/>
            <person name="Yoshikawa Y."/>
            <person name="Matsunawa H."/>
            <person name="Ichihara T."/>
            <person name="Shiohata N."/>
            <person name="Sano S."/>
            <person name="Moriya S."/>
            <person name="Momiyama H."/>
            <person name="Satoh N."/>
            <person name="Takami S."/>
            <person name="Terashima Y."/>
            <person name="Suzuki O."/>
            <person name="Nakagawa S."/>
            <person name="Senoh A."/>
            <person name="Mizoguchi H."/>
            <person name="Goto Y."/>
            <person name="Shimizu F."/>
            <person name="Wakebe H."/>
            <person name="Hishigaki H."/>
            <person name="Watanabe T."/>
            <person name="Sugiyama A."/>
            <person name="Takemoto M."/>
            <person name="Kawakami B."/>
            <person name="Yamazaki M."/>
            <person name="Watanabe K."/>
            <person name="Kumagai A."/>
            <person name="Itakura S."/>
            <person name="Fukuzumi Y."/>
            <person name="Fujimori Y."/>
            <person name="Komiyama M."/>
            <person name="Tashiro H."/>
            <person name="Tanigami A."/>
            <person name="Fujiwara T."/>
            <person name="Ono T."/>
            <person name="Yamada K."/>
            <person name="Fujii Y."/>
            <person name="Ozaki K."/>
            <person name="Hirao M."/>
            <person name="Ohmori Y."/>
            <person name="Kawabata A."/>
            <person name="Hikiji T."/>
            <person name="Kobatake N."/>
            <person name="Inagaki H."/>
            <person name="Ikema Y."/>
            <person name="Okamoto S."/>
            <person name="Okitani R."/>
            <person name="Kawakami T."/>
            <person name="Noguchi S."/>
            <person name="Itoh T."/>
            <person name="Shigeta K."/>
            <person name="Senba T."/>
            <person name="Matsumura K."/>
            <person name="Nakajima Y."/>
            <person name="Mizuno T."/>
            <person name="Morinaga M."/>
            <person name="Sasaki M."/>
            <person name="Togashi T."/>
            <person name="Oyama M."/>
            <person name="Hata H."/>
            <person name="Watanabe M."/>
            <person name="Komatsu T."/>
            <person name="Mizushima-Sugano J."/>
            <person name="Satoh T."/>
            <person name="Shirai Y."/>
            <person name="Takahashi Y."/>
            <person name="Nakagawa K."/>
            <person name="Okumura K."/>
            <person name="Nagase T."/>
            <person name="Nomura N."/>
            <person name="Kikuchi H."/>
            <person name="Masuho Y."/>
            <person name="Yamashita R."/>
            <person name="Nakai K."/>
            <person name="Yada T."/>
            <person name="Nakamura Y."/>
            <person name="Ohara O."/>
            <person name="Isogai T."/>
            <person name="Sugano S."/>
        </authorList>
    </citation>
    <scope>NUCLEOTIDE SEQUENCE [LARGE SCALE MRNA] OF 1-586 (ISOFORM 2)</scope>
    <source>
        <tissue>Colon</tissue>
    </source>
</reference>
<reference key="10">
    <citation type="journal article" date="2000" name="DNA Res.">
        <title>Prediction of the coding sequences of unidentified human genes. XIX. The complete sequences of 100 new cDNA clones from brain which code for large proteins in vitro.</title>
        <authorList>
            <person name="Nagase T."/>
            <person name="Kikuno R."/>
            <person name="Hattori A."/>
            <person name="Kondo Y."/>
            <person name="Okumura K."/>
            <person name="Ohara O."/>
        </authorList>
    </citation>
    <scope>NUCLEOTIDE SEQUENCE [LARGE SCALE MRNA] OF 5-1674 (ISOFORM 2)</scope>
    <source>
        <tissue>Brain</tissue>
    </source>
</reference>
<reference key="11">
    <citation type="journal article" date="2007" name="BMC Genomics">
        <title>The full-ORF clone resource of the German cDNA consortium.</title>
        <authorList>
            <person name="Bechtel S."/>
            <person name="Rosenfelder H."/>
            <person name="Duda A."/>
            <person name="Schmidt C.P."/>
            <person name="Ernst U."/>
            <person name="Wellenreuther R."/>
            <person name="Mehrle A."/>
            <person name="Schuster C."/>
            <person name="Bahr A."/>
            <person name="Bloecker H."/>
            <person name="Heubner D."/>
            <person name="Hoerlein A."/>
            <person name="Michel G."/>
            <person name="Wedler H."/>
            <person name="Koehrer K."/>
            <person name="Ottenwaelder B."/>
            <person name="Poustka A."/>
            <person name="Wiemann S."/>
            <person name="Schupp I."/>
        </authorList>
    </citation>
    <scope>NUCLEOTIDE SEQUENCE [LARGE SCALE MRNA] OF 654-1674 (ISOFORM 3)</scope>
    <source>
        <tissue>Liver</tissue>
    </source>
</reference>
<reference key="12">
    <citation type="journal article" date="2006" name="Cell">
        <title>Global, in vivo, and site-specific phosphorylation dynamics in signaling networks.</title>
        <authorList>
            <person name="Olsen J.V."/>
            <person name="Blagoev B."/>
            <person name="Gnad F."/>
            <person name="Macek B."/>
            <person name="Kumar C."/>
            <person name="Mortensen P."/>
            <person name="Mann M."/>
        </authorList>
    </citation>
    <scope>IDENTIFICATION BY MASS SPECTROMETRY [LARGE SCALE ANALYSIS]</scope>
    <source>
        <tissue>Cervix carcinoma</tissue>
    </source>
</reference>
<reference key="13">
    <citation type="journal article" date="2008" name="Proc. Natl. Acad. Sci. U.S.A.">
        <title>A quantitative atlas of mitotic phosphorylation.</title>
        <authorList>
            <person name="Dephoure N."/>
            <person name="Zhou C."/>
            <person name="Villen J."/>
            <person name="Beausoleil S.A."/>
            <person name="Bakalarski C.E."/>
            <person name="Elledge S.J."/>
            <person name="Gygi S.P."/>
        </authorList>
    </citation>
    <scope>PHOSPHORYLATION [LARGE SCALE ANALYSIS] AT SER-1212; SER-1239 AND SER-1673</scope>
    <scope>IDENTIFICATION BY MASS SPECTROMETRY [LARGE SCALE ANALYSIS]</scope>
    <source>
        <tissue>Cervix carcinoma</tissue>
    </source>
</reference>
<reference key="14">
    <citation type="journal article" date="2009" name="Anal. Chem.">
        <title>Lys-N and trypsin cover complementary parts of the phosphoproteome in a refined SCX-based approach.</title>
        <authorList>
            <person name="Gauci S."/>
            <person name="Helbig A.O."/>
            <person name="Slijper M."/>
            <person name="Krijgsveld J."/>
            <person name="Heck A.J."/>
            <person name="Mohammed S."/>
        </authorList>
    </citation>
    <scope>IDENTIFICATION BY MASS SPECTROMETRY [LARGE SCALE ANALYSIS]</scope>
</reference>
<reference key="15">
    <citation type="journal article" date="2009" name="Sci. Signal.">
        <title>Quantitative phosphoproteomic analysis of T cell receptor signaling reveals system-wide modulation of protein-protein interactions.</title>
        <authorList>
            <person name="Mayya V."/>
            <person name="Lundgren D.H."/>
            <person name="Hwang S.-I."/>
            <person name="Rezaul K."/>
            <person name="Wu L."/>
            <person name="Eng J.K."/>
            <person name="Rodionov V."/>
            <person name="Han D.K."/>
        </authorList>
    </citation>
    <scope>IDENTIFICATION BY MASS SPECTROMETRY [LARGE SCALE ANALYSIS]</scope>
    <source>
        <tissue>Leukemic T-cell</tissue>
    </source>
</reference>
<reference key="16">
    <citation type="journal article" date="2010" name="Sci. Signal.">
        <title>Quantitative phosphoproteomics reveals widespread full phosphorylation site occupancy during mitosis.</title>
        <authorList>
            <person name="Olsen J.V."/>
            <person name="Vermeulen M."/>
            <person name="Santamaria A."/>
            <person name="Kumar C."/>
            <person name="Miller M.L."/>
            <person name="Jensen L.J."/>
            <person name="Gnad F."/>
            <person name="Cox J."/>
            <person name="Jensen T.S."/>
            <person name="Nigg E.A."/>
            <person name="Brunak S."/>
            <person name="Mann M."/>
        </authorList>
    </citation>
    <scope>PHOSPHORYLATION [LARGE SCALE ANALYSIS] AT SER-524; SER-1212; SER-1239; SER-1662; THR-1664 AND SER-1673</scope>
    <scope>IDENTIFICATION BY MASS SPECTROMETRY [LARGE SCALE ANALYSIS]</scope>
    <source>
        <tissue>Cervix carcinoma</tissue>
    </source>
</reference>
<reference key="17">
    <citation type="journal article" date="2011" name="BMC Syst. Biol.">
        <title>Initial characterization of the human central proteome.</title>
        <authorList>
            <person name="Burkard T.R."/>
            <person name="Planyavsky M."/>
            <person name="Kaupe I."/>
            <person name="Breitwieser F.P."/>
            <person name="Buerckstuemmer T."/>
            <person name="Bennett K.L."/>
            <person name="Superti-Furga G."/>
            <person name="Colinge J."/>
        </authorList>
    </citation>
    <scope>IDENTIFICATION BY MASS SPECTROMETRY [LARGE SCALE ANALYSIS]</scope>
</reference>
<reference key="18">
    <citation type="journal article" date="2011" name="Sci. Signal.">
        <title>System-wide temporal characterization of the proteome and phosphoproteome of human embryonic stem cell differentiation.</title>
        <authorList>
            <person name="Rigbolt K.T."/>
            <person name="Prokhorova T.A."/>
            <person name="Akimov V."/>
            <person name="Henningsen J."/>
            <person name="Johansen P.T."/>
            <person name="Kratchmarova I."/>
            <person name="Kassem M."/>
            <person name="Mann M."/>
            <person name="Olsen J.V."/>
            <person name="Blagoev B."/>
        </authorList>
    </citation>
    <scope>PHOSPHORYLATION [LARGE SCALE ANALYSIS] AT SER-1212 AND SER-1239</scope>
    <scope>IDENTIFICATION BY MASS SPECTROMETRY [LARGE SCALE ANALYSIS]</scope>
</reference>
<reference key="19">
    <citation type="journal article" date="2012" name="Mol. Cell. Proteomics">
        <title>Comparative large-scale characterisation of plant vs. mammal proteins reveals similar and idiosyncratic N-alpha acetylation features.</title>
        <authorList>
            <person name="Bienvenut W.V."/>
            <person name="Sumpton D."/>
            <person name="Martinez A."/>
            <person name="Lilla S."/>
            <person name="Espagne C."/>
            <person name="Meinnel T."/>
            <person name="Giglione C."/>
        </authorList>
    </citation>
    <scope>ACETYLATION [LARGE SCALE ANALYSIS] AT MET-1</scope>
    <scope>IDENTIFICATION BY MASS SPECTROMETRY [LARGE SCALE ANALYSIS]</scope>
</reference>
<reference key="20">
    <citation type="journal article" date="2012" name="Proc. Natl. Acad. Sci. U.S.A.">
        <title>N-terminal acetylome analyses and functional insights of the N-terminal acetyltransferase NatB.</title>
        <authorList>
            <person name="Van Damme P."/>
            <person name="Lasa M."/>
            <person name="Polevoda B."/>
            <person name="Gazquez C."/>
            <person name="Elosegui-Artola A."/>
            <person name="Kim D.S."/>
            <person name="De Juan-Pardo E."/>
            <person name="Demeyer K."/>
            <person name="Hole K."/>
            <person name="Larrea E."/>
            <person name="Timmerman E."/>
            <person name="Prieto J."/>
            <person name="Arnesen T."/>
            <person name="Sherman F."/>
            <person name="Gevaert K."/>
            <person name="Aldabe R."/>
        </authorList>
    </citation>
    <scope>IDENTIFICATION BY MASS SPECTROMETRY [LARGE SCALE ANALYSIS]</scope>
</reference>
<reference key="21">
    <citation type="journal article" date="2013" name="Dev. Cell">
        <title>CFEOM1-associated kinesin KIF21A is a cortical microtubule growth inhibitor.</title>
        <authorList>
            <person name="van der Vaart B."/>
            <person name="van Riel W.E."/>
            <person name="Doodhi H."/>
            <person name="Kevenaar J.T."/>
            <person name="Katrukha E.A."/>
            <person name="Gumy L."/>
            <person name="Bouchet B.P."/>
            <person name="Grigoriev I."/>
            <person name="Spangler S.A."/>
            <person name="Yu K.L."/>
            <person name="Wulf P.S."/>
            <person name="Wu J."/>
            <person name="Lansbergen G."/>
            <person name="van Battum E.Y."/>
            <person name="Pasterkamp R.J."/>
            <person name="Mimori-Kiyosue Y."/>
            <person name="Demmers J."/>
            <person name="Olieric N."/>
            <person name="Maly I.V."/>
            <person name="Hoogenraad C.C."/>
            <person name="Akhmanova A."/>
        </authorList>
    </citation>
    <scope>FUNCTION</scope>
    <scope>SUBCELLULAR LOCATION</scope>
    <scope>SUBUNIT</scope>
    <scope>INTERACTION WITH KANK1</scope>
    <scope>DOMAIN</scope>
    <scope>VARIANTS CFEOM1 TRP-28; THR-356 AND TRP-954</scope>
</reference>
<reference key="22">
    <citation type="journal article" date="2013" name="J. Proteome Res.">
        <title>Toward a comprehensive characterization of a human cancer cell phosphoproteome.</title>
        <authorList>
            <person name="Zhou H."/>
            <person name="Di Palma S."/>
            <person name="Preisinger C."/>
            <person name="Peng M."/>
            <person name="Polat A.N."/>
            <person name="Heck A.J."/>
            <person name="Mohammed S."/>
        </authorList>
    </citation>
    <scope>PHOSPHORYLATION [LARGE SCALE ANALYSIS] AT SER-524; SER-1212; SER-1225; SER-1229 AND SER-1239</scope>
    <scope>IDENTIFICATION BY MASS SPECTROMETRY [LARGE SCALE ANALYSIS]</scope>
    <source>
        <tissue>Cervix carcinoma</tissue>
        <tissue>Erythroleukemia</tissue>
    </source>
</reference>
<reference key="23">
    <citation type="journal article" date="2014" name="J. Proteomics">
        <title>An enzyme assisted RP-RPLC approach for in-depth analysis of human liver phosphoproteome.</title>
        <authorList>
            <person name="Bian Y."/>
            <person name="Song C."/>
            <person name="Cheng K."/>
            <person name="Dong M."/>
            <person name="Wang F."/>
            <person name="Huang J."/>
            <person name="Sun D."/>
            <person name="Wang L."/>
            <person name="Ye M."/>
            <person name="Zou H."/>
        </authorList>
    </citation>
    <scope>PHOSPHORYLATION [LARGE SCALE ANALYSIS] AT SER-1212</scope>
    <scope>IDENTIFICATION BY MASS SPECTROMETRY [LARGE SCALE ANALYSIS]</scope>
    <source>
        <tissue>Liver</tissue>
    </source>
</reference>
<reference key="24">
    <citation type="journal article" date="2016" name="Elife">
        <title>Talin-KANK1 interaction controls the recruitment of cortical microtubule stabilizing complexes to focal adhesions.</title>
        <authorList>
            <person name="Bouchet B.P."/>
            <person name="Gough R.E."/>
            <person name="Ammon Y.C."/>
            <person name="van de Willige D."/>
            <person name="Post H."/>
            <person name="Jacquemet G."/>
            <person name="Altelaar A.M."/>
            <person name="Heck A.J."/>
            <person name="Goult B.T."/>
            <person name="Akhmanova A."/>
        </authorList>
    </citation>
    <scope>SUBUNIT</scope>
</reference>
<reference key="25">
    <citation type="submission" date="2015-08" db="PDB data bank">
        <title>Structure of KIF21A regulatory coiled coil.</title>
        <authorList>
            <person name="Bianchi S."/>
            <person name="Kraatz S."/>
            <person name="Steinmetz M.O."/>
            <person name="Kammerer A.R."/>
        </authorList>
    </citation>
    <scope>X-RAY CRYSTALLOGRAPHY (2.50 ANGSTROMS) OF 938-1017</scope>
</reference>
<reference key="26">
    <citation type="journal article" date="2018" name="Biosci. Rep.">
        <title>Combinatorial use of disulfide bridges and native sulfur-SAD phasing for rapid structure determination of coiled-coils.</title>
        <authorList>
            <person name="Kraatz S.H.W."/>
            <person name="Bianchi S."/>
            <person name="Steinmetz M.O."/>
        </authorList>
    </citation>
    <scope>X-RAY CRYSTALLOGRAPHY (2.18 ANGSTROMS) OF 938-1017 OF MUTANT CYS-947</scope>
</reference>
<reference key="27">
    <citation type="journal article" date="2018" name="J. Biol. Chem.">
        <title>Structural basis for the recognition of kinesin family member 21A (KIF21A) by the ankyrin domains of KANK1 and KANK2 proteins.</title>
        <authorList>
            <person name="Guo Q."/>
            <person name="Liao S."/>
            <person name="Zhu Z."/>
            <person name="Li Y."/>
            <person name="Li F."/>
            <person name="Xu C."/>
        </authorList>
    </citation>
    <scope>X-RAY CRYSTALLOGRAPHY (1.89 ANGSTROMS) OF 1146-1167 IN COMPLEX WITH KANK1 AND KANK2 ANKYRIN REPEAT REGIONS</scope>
    <scope>INTERACTION WITH KANK1 AND KANK2</scope>
    <scope>MUTAGENESIS OF ARG-1154 AND LEU-1164</scope>
</reference>
<reference key="28">
    <citation type="submission" date="2020-10" db="PDB data bank">
        <title>Crystal structure of the WD-repeat domain of human KIF21A.</title>
        <authorList>
            <person name="Zeng H."/>
            <person name="Dong A."/>
            <person name="Loppnau P."/>
            <person name="Hutchinson A."/>
            <person name="Seitova A."/>
            <person name="Edwards A.M."/>
            <person name="Arrowsmith C.H."/>
            <person name="Halabelian L."/>
        </authorList>
    </citation>
    <scope>X-RAY CRYSTALLOGRAPHY (1.52 ANGSTROMS) OF 1337-1653</scope>
</reference>
<reference key="29">
    <citation type="journal article" date="2005" name="Arch. Ophthalmol.">
        <title>A novel KIF21A mutation in a patient with congenital fibrosis of the extraocular muscles and Marcus Gunn jaw-winking phenomenon.</title>
        <authorList>
            <person name="Yamada K."/>
            <person name="Hunter D.G."/>
            <person name="Andrews C."/>
            <person name="Engle E.C."/>
        </authorList>
    </citation>
    <scope>VARIANT CFEOM1 THR-947</scope>
</reference>
<reference key="30">
    <citation type="journal article" date="2007" name="BMC Genet.">
        <title>Three novel mutations in KIF21A highlight the importance of the third coiled-coil stalk domain in the etiology of CFEOM1.</title>
        <authorList>
            <person name="Chan W.M."/>
            <person name="Andrews C."/>
            <person name="Dragan L."/>
            <person name="Fredrick D."/>
            <person name="Armstrong L."/>
            <person name="Lyons C."/>
            <person name="Geraghty M.T."/>
            <person name="Hunter D.G."/>
            <person name="Yazdani A."/>
            <person name="Traboulsi E.I."/>
            <person name="Pott J.W."/>
            <person name="Gutowski N.J."/>
            <person name="Ellard S."/>
            <person name="Young E."/>
            <person name="Hanisch F."/>
            <person name="Koc F."/>
            <person name="Schnall B."/>
            <person name="Engle E.C."/>
        </authorList>
    </citation>
    <scope>VARIANTS CFEOM1 THR-356; GLN-944; GLN-954; LEU-954; TRP-954 AND PRO-1008</scope>
</reference>
<reference key="31">
    <citation type="journal article" date="2008" name="Arch. Ophthalmol.">
        <title>Novel and recurrent KIF21A mutations in congenital fibrosis of the extraocular muscles type 1 and 3.</title>
        <authorList>
            <person name="Lu S."/>
            <person name="Zhao C."/>
            <person name="Zhao K."/>
            <person name="Li N."/>
            <person name="Larsson C."/>
        </authorList>
    </citation>
    <scope>VARIANTS CFEOM1 TRP-28; GLN-954 AND TRP-954</scope>
</reference>
<reference key="32">
    <citation type="journal article" date="2014" name="Mol. Vis.">
        <title>A novel de novo KIF21A mutation in a patient with congenital fibrosis of the extraocular muscles and Moebius syndrome.</title>
        <authorList>
            <person name="Ali Z."/>
            <person name="Xing C."/>
            <person name="Anwar D."/>
            <person name="Itani K."/>
            <person name="Weakley D."/>
            <person name="Gong X."/>
            <person name="Pascual J.M."/>
            <person name="Mootha V.V."/>
        </authorList>
    </citation>
    <scope>VARIANT CFEOM1 GLU-352</scope>
</reference>
<keyword id="KW-0002">3D-structure</keyword>
<keyword id="KW-0007">Acetylation</keyword>
<keyword id="KW-0025">Alternative splicing</keyword>
<keyword id="KW-0067">ATP-binding</keyword>
<keyword id="KW-0966">Cell projection</keyword>
<keyword id="KW-0175">Coiled coil</keyword>
<keyword id="KW-0963">Cytoplasm</keyword>
<keyword id="KW-0206">Cytoskeleton</keyword>
<keyword id="KW-0225">Disease variant</keyword>
<keyword id="KW-0493">Microtubule</keyword>
<keyword id="KW-0505">Motor protein</keyword>
<keyword id="KW-0547">Nucleotide-binding</keyword>
<keyword id="KW-0597">Phosphoprotein</keyword>
<keyword id="KW-1267">Proteomics identification</keyword>
<keyword id="KW-1185">Reference proteome</keyword>
<keyword id="KW-0677">Repeat</keyword>
<keyword id="KW-0853">WD repeat</keyword>
<name>KI21A_HUMAN</name>
<proteinExistence type="evidence at protein level"/>
<accession>Q7Z4S6</accession>
<accession>A8MX28</accession>
<accession>B0I1R9</accession>
<accession>B9EGE4</accession>
<accession>F5H0C3</accession>
<accession>F5H219</accession>
<accession>Q2UVF1</accession>
<accession>Q6UKL9</accession>
<accession>Q7Z668</accession>
<accession>Q86WZ5</accession>
<accession>Q8IVZ8</accession>
<accession>Q9C0F5</accession>
<accession>Q9NXU4</accession>
<accession>Q9Y590</accession>
<dbReference type="EMBL" id="AY368076">
    <property type="protein sequence ID" value="AAR04774.1"/>
    <property type="molecule type" value="mRNA"/>
</dbReference>
<dbReference type="EMBL" id="AM177179">
    <property type="protein sequence ID" value="CAJ45483.1"/>
    <property type="molecule type" value="mRNA"/>
</dbReference>
<dbReference type="EMBL" id="AF450487">
    <property type="protein sequence ID" value="AAP97680.1"/>
    <property type="status" value="ALT_FRAME"/>
    <property type="molecule type" value="mRNA"/>
</dbReference>
<dbReference type="EMBL" id="AB290166">
    <property type="protein sequence ID" value="BAG06720.1"/>
    <property type="molecule type" value="mRNA"/>
</dbReference>
<dbReference type="EMBL" id="AC084373">
    <property type="status" value="NOT_ANNOTATED_CDS"/>
    <property type="molecule type" value="Genomic_DNA"/>
</dbReference>
<dbReference type="EMBL" id="AC090668">
    <property type="status" value="NOT_ANNOTATED_CDS"/>
    <property type="molecule type" value="Genomic_DNA"/>
</dbReference>
<dbReference type="EMBL" id="AC121334">
    <property type="status" value="NOT_ANNOTATED_CDS"/>
    <property type="molecule type" value="Genomic_DNA"/>
</dbReference>
<dbReference type="EMBL" id="AF155117">
    <property type="protein sequence ID" value="AAD42883.1"/>
    <property type="status" value="ALT_SEQ"/>
    <property type="molecule type" value="mRNA"/>
</dbReference>
<dbReference type="EMBL" id="AK000059">
    <property type="protein sequence ID" value="BAA90916.1"/>
    <property type="status" value="ALT_SEQ"/>
    <property type="molecule type" value="mRNA"/>
</dbReference>
<dbReference type="EMBL" id="CH471111">
    <property type="protein sequence ID" value="EAW57803.1"/>
    <property type="molecule type" value="Genomic_DNA"/>
</dbReference>
<dbReference type="EMBL" id="BC041430">
    <property type="protein sequence ID" value="AAH41430.1"/>
    <property type="status" value="ALT_SEQ"/>
    <property type="molecule type" value="mRNA"/>
</dbReference>
<dbReference type="EMBL" id="BC047572">
    <property type="protein sequence ID" value="AAH47572.1"/>
    <property type="molecule type" value="mRNA"/>
</dbReference>
<dbReference type="EMBL" id="BC136414">
    <property type="protein sequence ID" value="AAI36415.1"/>
    <property type="molecule type" value="mRNA"/>
</dbReference>
<dbReference type="EMBL" id="AB051495">
    <property type="protein sequence ID" value="BAB21799.2"/>
    <property type="molecule type" value="mRNA"/>
</dbReference>
<dbReference type="EMBL" id="BX537855">
    <property type="protein sequence ID" value="CAD97863.1"/>
    <property type="molecule type" value="mRNA"/>
</dbReference>
<dbReference type="CCDS" id="CCDS31773.1">
    <molecule id="Q7Z4S6-2"/>
</dbReference>
<dbReference type="CCDS" id="CCDS53774.1">
    <molecule id="Q7Z4S6-6"/>
</dbReference>
<dbReference type="CCDS" id="CCDS53775.1">
    <molecule id="Q7Z4S6-5"/>
</dbReference>
<dbReference type="CCDS" id="CCDS53776.1">
    <molecule id="Q7Z4S6-1"/>
</dbReference>
<dbReference type="RefSeq" id="NP_001166934.1">
    <molecule id="Q7Z4S6-5"/>
    <property type="nucleotide sequence ID" value="NM_001173463.2"/>
</dbReference>
<dbReference type="RefSeq" id="NP_001166935.1">
    <molecule id="Q7Z4S6-1"/>
    <property type="nucleotide sequence ID" value="NM_001173464.2"/>
</dbReference>
<dbReference type="RefSeq" id="NP_001166936.1">
    <molecule id="Q7Z4S6-6"/>
    <property type="nucleotide sequence ID" value="NM_001173465.2"/>
</dbReference>
<dbReference type="RefSeq" id="NP_001365368.1">
    <molecule id="Q7Z4S6-4"/>
    <property type="nucleotide sequence ID" value="NM_001378439.1"/>
</dbReference>
<dbReference type="RefSeq" id="NP_060111.2">
    <molecule id="Q7Z4S6-2"/>
    <property type="nucleotide sequence ID" value="NM_017641.3"/>
</dbReference>
<dbReference type="RefSeq" id="XP_005269064.1">
    <property type="nucleotide sequence ID" value="XM_005269007.2"/>
</dbReference>
<dbReference type="RefSeq" id="XP_005269070.1">
    <molecule id="Q7Z4S6-3"/>
    <property type="nucleotide sequence ID" value="XM_005269013.4"/>
</dbReference>
<dbReference type="RefSeq" id="XP_054228483.1">
    <molecule id="Q7Z4S6-3"/>
    <property type="nucleotide sequence ID" value="XM_054372508.1"/>
</dbReference>
<dbReference type="PDB" id="5D3A">
    <property type="method" value="X-ray"/>
    <property type="resolution" value="2.50 A"/>
    <property type="chains" value="A/B=938-1017"/>
</dbReference>
<dbReference type="PDB" id="5NFD">
    <property type="method" value="X-ray"/>
    <property type="resolution" value="2.18 A"/>
    <property type="chains" value="A/B=938-1017"/>
</dbReference>
<dbReference type="PDB" id="5YBU">
    <property type="method" value="X-ray"/>
    <property type="resolution" value="1.89 A"/>
    <property type="chains" value="B=1146-1167"/>
</dbReference>
<dbReference type="PDB" id="5YBV">
    <property type="method" value="X-ray"/>
    <property type="resolution" value="2.12 A"/>
    <property type="chains" value="C/D=1146-1167"/>
</dbReference>
<dbReference type="PDB" id="7KLJ">
    <property type="method" value="X-ray"/>
    <property type="resolution" value="1.52 A"/>
    <property type="chains" value="A/B=1337-1653"/>
</dbReference>
<dbReference type="PDBsum" id="5D3A"/>
<dbReference type="PDBsum" id="5NFD"/>
<dbReference type="PDBsum" id="5YBU"/>
<dbReference type="PDBsum" id="5YBV"/>
<dbReference type="PDBsum" id="7KLJ"/>
<dbReference type="SMR" id="Q7Z4S6"/>
<dbReference type="BioGRID" id="120746">
    <property type="interactions" value="110"/>
</dbReference>
<dbReference type="DIP" id="DIP-56253N"/>
<dbReference type="FunCoup" id="Q7Z4S6">
    <property type="interactions" value="449"/>
</dbReference>
<dbReference type="IntAct" id="Q7Z4S6">
    <property type="interactions" value="57"/>
</dbReference>
<dbReference type="MINT" id="Q7Z4S6"/>
<dbReference type="STRING" id="9606.ENSP00000354878"/>
<dbReference type="BindingDB" id="Q7Z4S6"/>
<dbReference type="ChEMBL" id="CHEMBL5169171"/>
<dbReference type="GlyGen" id="Q7Z4S6">
    <property type="glycosylation" value="3 sites, 1 O-linked glycan (1 site)"/>
</dbReference>
<dbReference type="iPTMnet" id="Q7Z4S6"/>
<dbReference type="PhosphoSitePlus" id="Q7Z4S6"/>
<dbReference type="BioMuta" id="KIF21A"/>
<dbReference type="DMDM" id="50400977"/>
<dbReference type="jPOST" id="Q7Z4S6"/>
<dbReference type="MassIVE" id="Q7Z4S6"/>
<dbReference type="PaxDb" id="9606-ENSP00000354878"/>
<dbReference type="PeptideAtlas" id="Q7Z4S6"/>
<dbReference type="ProteomicsDB" id="25297"/>
<dbReference type="ProteomicsDB" id="25828"/>
<dbReference type="ProteomicsDB" id="69226">
    <molecule id="Q7Z4S6-1"/>
</dbReference>
<dbReference type="ProteomicsDB" id="69227">
    <molecule id="Q7Z4S6-2"/>
</dbReference>
<dbReference type="ProteomicsDB" id="69228">
    <molecule id="Q7Z4S6-3"/>
</dbReference>
<dbReference type="ProteomicsDB" id="69229">
    <molecule id="Q7Z4S6-4"/>
</dbReference>
<dbReference type="Pumba" id="Q7Z4S6"/>
<dbReference type="Antibodypedia" id="13055">
    <property type="antibodies" value="57 antibodies from 22 providers"/>
</dbReference>
<dbReference type="DNASU" id="55605"/>
<dbReference type="Ensembl" id="ENST00000361418.10">
    <molecule id="Q7Z4S6-1"/>
    <property type="protein sequence ID" value="ENSP00000354878.5"/>
    <property type="gene ID" value="ENSG00000139116.19"/>
</dbReference>
<dbReference type="Ensembl" id="ENST00000361961.7">
    <molecule id="Q7Z4S6-2"/>
    <property type="protein sequence ID" value="ENSP00000354851.3"/>
    <property type="gene ID" value="ENSG00000139116.19"/>
</dbReference>
<dbReference type="Ensembl" id="ENST00000541463.6">
    <molecule id="Q7Z4S6-6"/>
    <property type="protein sequence ID" value="ENSP00000438075.2"/>
    <property type="gene ID" value="ENSG00000139116.19"/>
</dbReference>
<dbReference type="Ensembl" id="ENST00000544797.6">
    <molecule id="Q7Z4S6-5"/>
    <property type="protein sequence ID" value="ENSP00000445606.2"/>
    <property type="gene ID" value="ENSG00000139116.19"/>
</dbReference>
<dbReference type="GeneID" id="55605"/>
<dbReference type="KEGG" id="hsa:55605"/>
<dbReference type="MANE-Select" id="ENST00000361418.10">
    <property type="protein sequence ID" value="ENSP00000354878.5"/>
    <property type="RefSeq nucleotide sequence ID" value="NM_001173464.2"/>
    <property type="RefSeq protein sequence ID" value="NP_001166935.1"/>
</dbReference>
<dbReference type="UCSC" id="uc001rlx.4">
    <molecule id="Q7Z4S6-1"/>
    <property type="organism name" value="human"/>
</dbReference>
<dbReference type="AGR" id="HGNC:19349"/>
<dbReference type="CTD" id="55605"/>
<dbReference type="DisGeNET" id="55605"/>
<dbReference type="GeneCards" id="KIF21A"/>
<dbReference type="GeneReviews" id="KIF21A"/>
<dbReference type="HGNC" id="HGNC:19349">
    <property type="gene designation" value="KIF21A"/>
</dbReference>
<dbReference type="HPA" id="ENSG00000139116">
    <property type="expression patterns" value="Tissue enhanced (retina)"/>
</dbReference>
<dbReference type="MalaCards" id="KIF21A"/>
<dbReference type="MIM" id="135700">
    <property type="type" value="phenotype"/>
</dbReference>
<dbReference type="MIM" id="608283">
    <property type="type" value="gene"/>
</dbReference>
<dbReference type="neXtProt" id="NX_Q7Z4S6"/>
<dbReference type="OpenTargets" id="ENSG00000139116"/>
<dbReference type="Orphanet" id="45358">
    <property type="disease" value="Congenital fibrosis of extraocular muscles"/>
</dbReference>
<dbReference type="Orphanet" id="994">
    <property type="disease" value="Fetal akinesia deformation sequence"/>
</dbReference>
<dbReference type="PharmGKB" id="PA134882934"/>
<dbReference type="VEuPathDB" id="HostDB:ENSG00000139116"/>
<dbReference type="eggNOG" id="KOG0244">
    <property type="taxonomic scope" value="Eukaryota"/>
</dbReference>
<dbReference type="GeneTree" id="ENSGT00940000155323"/>
<dbReference type="HOGENOM" id="CLU_001485_4_5_1"/>
<dbReference type="InParanoid" id="Q7Z4S6"/>
<dbReference type="OMA" id="QVAHTDV"/>
<dbReference type="OrthoDB" id="3176171at2759"/>
<dbReference type="PAN-GO" id="Q7Z4S6">
    <property type="GO annotations" value="6 GO annotations based on evolutionary models"/>
</dbReference>
<dbReference type="PhylomeDB" id="Q7Z4S6"/>
<dbReference type="TreeFam" id="TF105224"/>
<dbReference type="PathwayCommons" id="Q7Z4S6"/>
<dbReference type="Reactome" id="R-HSA-6811434">
    <property type="pathway name" value="COPI-dependent Golgi-to-ER retrograde traffic"/>
</dbReference>
<dbReference type="Reactome" id="R-HSA-983189">
    <property type="pathway name" value="Kinesins"/>
</dbReference>
<dbReference type="SignaLink" id="Q7Z4S6"/>
<dbReference type="BioGRID-ORCS" id="55605">
    <property type="hits" value="13 hits in 1153 CRISPR screens"/>
</dbReference>
<dbReference type="CD-CODE" id="FB4E32DD">
    <property type="entry name" value="Presynaptic clusters and postsynaptic densities"/>
</dbReference>
<dbReference type="ChiTaRS" id="KIF21A">
    <property type="organism name" value="human"/>
</dbReference>
<dbReference type="GeneWiki" id="KIF21A"/>
<dbReference type="GenomeRNAi" id="55605"/>
<dbReference type="Pharos" id="Q7Z4S6">
    <property type="development level" value="Tbio"/>
</dbReference>
<dbReference type="PRO" id="PR:Q7Z4S6"/>
<dbReference type="Proteomes" id="UP000005640">
    <property type="component" value="Chromosome 12"/>
</dbReference>
<dbReference type="RNAct" id="Q7Z4S6">
    <property type="molecule type" value="protein"/>
</dbReference>
<dbReference type="Bgee" id="ENSG00000139116">
    <property type="expression patterns" value="Expressed in dorsal root ganglion and 194 other cell types or tissues"/>
</dbReference>
<dbReference type="ExpressionAtlas" id="Q7Z4S6">
    <property type="expression patterns" value="baseline and differential"/>
</dbReference>
<dbReference type="GO" id="GO:1904115">
    <property type="term" value="C:axon cytoplasm"/>
    <property type="evidence" value="ECO:0007669"/>
    <property type="project" value="GOC"/>
</dbReference>
<dbReference type="GO" id="GO:0044295">
    <property type="term" value="C:axonal growth cone"/>
    <property type="evidence" value="ECO:0000314"/>
    <property type="project" value="UniProtKB"/>
</dbReference>
<dbReference type="GO" id="GO:0005938">
    <property type="term" value="C:cell cortex"/>
    <property type="evidence" value="ECO:0007669"/>
    <property type="project" value="UniProtKB-SubCell"/>
</dbReference>
<dbReference type="GO" id="GO:0005737">
    <property type="term" value="C:cytoplasm"/>
    <property type="evidence" value="ECO:0000318"/>
    <property type="project" value="GO_Central"/>
</dbReference>
<dbReference type="GO" id="GO:0005829">
    <property type="term" value="C:cytosol"/>
    <property type="evidence" value="ECO:0000314"/>
    <property type="project" value="HPA"/>
</dbReference>
<dbReference type="GO" id="GO:0030425">
    <property type="term" value="C:dendrite"/>
    <property type="evidence" value="ECO:0007669"/>
    <property type="project" value="UniProtKB-SubCell"/>
</dbReference>
<dbReference type="GO" id="GO:0005871">
    <property type="term" value="C:kinesin complex"/>
    <property type="evidence" value="ECO:0000318"/>
    <property type="project" value="GO_Central"/>
</dbReference>
<dbReference type="GO" id="GO:0005874">
    <property type="term" value="C:microtubule"/>
    <property type="evidence" value="ECO:0000318"/>
    <property type="project" value="GO_Central"/>
</dbReference>
<dbReference type="GO" id="GO:0098793">
    <property type="term" value="C:presynapse"/>
    <property type="evidence" value="ECO:0007669"/>
    <property type="project" value="Ensembl"/>
</dbReference>
<dbReference type="GO" id="GO:0071532">
    <property type="term" value="F:ankyrin repeat binding"/>
    <property type="evidence" value="ECO:0000353"/>
    <property type="project" value="UniProtKB"/>
</dbReference>
<dbReference type="GO" id="GO:0005524">
    <property type="term" value="F:ATP binding"/>
    <property type="evidence" value="ECO:0007669"/>
    <property type="project" value="UniProtKB-KW"/>
</dbReference>
<dbReference type="GO" id="GO:0016887">
    <property type="term" value="F:ATP hydrolysis activity"/>
    <property type="evidence" value="ECO:0000318"/>
    <property type="project" value="GO_Central"/>
</dbReference>
<dbReference type="GO" id="GO:0008017">
    <property type="term" value="F:microtubule binding"/>
    <property type="evidence" value="ECO:0000318"/>
    <property type="project" value="GO_Central"/>
</dbReference>
<dbReference type="GO" id="GO:0003777">
    <property type="term" value="F:microtubule motor activity"/>
    <property type="evidence" value="ECO:0000318"/>
    <property type="project" value="GO_Central"/>
</dbReference>
<dbReference type="GO" id="GO:0008574">
    <property type="term" value="F:plus-end-directed microtubule motor activity"/>
    <property type="evidence" value="ECO:0000314"/>
    <property type="project" value="UniProtKB"/>
</dbReference>
<dbReference type="GO" id="GO:0008089">
    <property type="term" value="P:anterograde axonal transport"/>
    <property type="evidence" value="ECO:0007669"/>
    <property type="project" value="Ensembl"/>
</dbReference>
<dbReference type="GO" id="GO:0043622">
    <property type="term" value="P:cortical microtubule organization"/>
    <property type="evidence" value="ECO:0000315"/>
    <property type="project" value="UniProtKB"/>
</dbReference>
<dbReference type="GO" id="GO:0007018">
    <property type="term" value="P:microtubule-based movement"/>
    <property type="evidence" value="ECO:0000318"/>
    <property type="project" value="GO_Central"/>
</dbReference>
<dbReference type="GO" id="GO:1902667">
    <property type="term" value="P:regulation of axon guidance"/>
    <property type="evidence" value="ECO:0000315"/>
    <property type="project" value="UniProtKB"/>
</dbReference>
<dbReference type="GO" id="GO:0031114">
    <property type="term" value="P:regulation of microtubule depolymerization"/>
    <property type="evidence" value="ECO:0000315"/>
    <property type="project" value="UniProtKB"/>
</dbReference>
<dbReference type="GO" id="GO:0031113">
    <property type="term" value="P:regulation of microtubule polymerization"/>
    <property type="evidence" value="ECO:0000315"/>
    <property type="project" value="UniProtKB"/>
</dbReference>
<dbReference type="CDD" id="cd01372">
    <property type="entry name" value="KISc_KIF4"/>
    <property type="match status" value="1"/>
</dbReference>
<dbReference type="CDD" id="cd22263">
    <property type="entry name" value="Rcc_KIF21A"/>
    <property type="match status" value="1"/>
</dbReference>
<dbReference type="CDD" id="cd00200">
    <property type="entry name" value="WD40"/>
    <property type="match status" value="1"/>
</dbReference>
<dbReference type="FunFam" id="2.130.10.10:FF:000233">
    <property type="entry name" value="Kinesin family member 21A"/>
    <property type="match status" value="1"/>
</dbReference>
<dbReference type="FunFam" id="2.130.10.10:FF:000370">
    <property type="entry name" value="Kinesin family member 21A"/>
    <property type="match status" value="1"/>
</dbReference>
<dbReference type="FunFam" id="3.40.850.10:FF:000011">
    <property type="entry name" value="Kinesin family member 21A"/>
    <property type="match status" value="1"/>
</dbReference>
<dbReference type="Gene3D" id="3.40.850.10">
    <property type="entry name" value="Kinesin motor domain"/>
    <property type="match status" value="1"/>
</dbReference>
<dbReference type="Gene3D" id="2.130.10.10">
    <property type="entry name" value="YVTN repeat-like/Quinoprotein amine dehydrogenase"/>
    <property type="match status" value="3"/>
</dbReference>
<dbReference type="InterPro" id="IPR056533">
    <property type="entry name" value="KIF21A/B_hel_1"/>
</dbReference>
<dbReference type="InterPro" id="IPR056532">
    <property type="entry name" value="KIF21A/B_hel_2"/>
</dbReference>
<dbReference type="InterPro" id="IPR027640">
    <property type="entry name" value="Kinesin-like_fam"/>
</dbReference>
<dbReference type="InterPro" id="IPR019821">
    <property type="entry name" value="Kinesin_motor_CS"/>
</dbReference>
<dbReference type="InterPro" id="IPR001752">
    <property type="entry name" value="Kinesin_motor_dom"/>
</dbReference>
<dbReference type="InterPro" id="IPR036961">
    <property type="entry name" value="Kinesin_motor_dom_sf"/>
</dbReference>
<dbReference type="InterPro" id="IPR027417">
    <property type="entry name" value="P-loop_NTPase"/>
</dbReference>
<dbReference type="InterPro" id="IPR015943">
    <property type="entry name" value="WD40/YVTN_repeat-like_dom_sf"/>
</dbReference>
<dbReference type="InterPro" id="IPR019775">
    <property type="entry name" value="WD40_repeat_CS"/>
</dbReference>
<dbReference type="InterPro" id="IPR036322">
    <property type="entry name" value="WD40_repeat_dom_sf"/>
</dbReference>
<dbReference type="InterPro" id="IPR001680">
    <property type="entry name" value="WD40_rpt"/>
</dbReference>
<dbReference type="PANTHER" id="PTHR47969">
    <property type="entry name" value="CHROMOSOME-ASSOCIATED KINESIN KIF4A-RELATED"/>
    <property type="match status" value="1"/>
</dbReference>
<dbReference type="PANTHER" id="PTHR47969:SF31">
    <property type="entry name" value="KINESIN FAMILY MEMBER 21A"/>
    <property type="match status" value="1"/>
</dbReference>
<dbReference type="Pfam" id="PF23203">
    <property type="entry name" value="KIF21A"/>
    <property type="match status" value="1"/>
</dbReference>
<dbReference type="Pfam" id="PF23204">
    <property type="entry name" value="KIF21A_2nd"/>
    <property type="match status" value="1"/>
</dbReference>
<dbReference type="Pfam" id="PF00225">
    <property type="entry name" value="Kinesin"/>
    <property type="match status" value="1"/>
</dbReference>
<dbReference type="Pfam" id="PF00400">
    <property type="entry name" value="WD40"/>
    <property type="match status" value="6"/>
</dbReference>
<dbReference type="PRINTS" id="PR00380">
    <property type="entry name" value="KINESINHEAVY"/>
</dbReference>
<dbReference type="SMART" id="SM00129">
    <property type="entry name" value="KISc"/>
    <property type="match status" value="1"/>
</dbReference>
<dbReference type="SMART" id="SM00320">
    <property type="entry name" value="WD40"/>
    <property type="match status" value="7"/>
</dbReference>
<dbReference type="SUPFAM" id="SSF52540">
    <property type="entry name" value="P-loop containing nucleoside triphosphate hydrolases"/>
    <property type="match status" value="1"/>
</dbReference>
<dbReference type="SUPFAM" id="SSF46579">
    <property type="entry name" value="Prefoldin"/>
    <property type="match status" value="1"/>
</dbReference>
<dbReference type="SUPFAM" id="SSF50978">
    <property type="entry name" value="WD40 repeat-like"/>
    <property type="match status" value="1"/>
</dbReference>
<dbReference type="PROSITE" id="PS00411">
    <property type="entry name" value="KINESIN_MOTOR_1"/>
    <property type="match status" value="1"/>
</dbReference>
<dbReference type="PROSITE" id="PS50067">
    <property type="entry name" value="KINESIN_MOTOR_2"/>
    <property type="match status" value="1"/>
</dbReference>
<dbReference type="PROSITE" id="PS00678">
    <property type="entry name" value="WD_REPEATS_1"/>
    <property type="match status" value="1"/>
</dbReference>
<dbReference type="PROSITE" id="PS50082">
    <property type="entry name" value="WD_REPEATS_2"/>
    <property type="match status" value="4"/>
</dbReference>
<dbReference type="PROSITE" id="PS50294">
    <property type="entry name" value="WD_REPEATS_REGION"/>
    <property type="match status" value="1"/>
</dbReference>
<comment type="function">
    <text evidence="1 9">Processive microtubule plus-end directed motor protein involved in neuronal axon guidance. Is recruited by KANK1 to cortical microtubule stabilizing complexes (CMSCs) at focal adhesions (FAs) rims where it promotes microtubule capture and stability. Controls microtubule polymerization rate at axonal growth cones and suppresses microtubule growth without inducing microtubule disassembly once it reaches the cell cortex.</text>
</comment>
<comment type="subunit">
    <text evidence="9 11 12">Part of a cortical microtubule stabilization complex (CMSC) composed of KANK1, PPFIA1, PPFIBP1, ERC1/ELKS, PHLDB2/LL5beta, CLASPs, KIF21A and possibly additional interactors; within CMSCs KANK1 and PHLDB2/LL5beta seem to be the core components for recruiting microtubule-binding proteins KIF21A and CLASPs, whereas PPFIA1, PPFIBP1 and ERC1/ELKS serve as scaffolds for protein clustering (PubMed:24120883, PubMed:27410476). Interacts (via residues 1146-1167) with KANK1 (via ankyrin repeats 1-5) and KANK2 (via ankyrin repeats 1-5) (PubMed:24120883, PubMed:29183992).</text>
</comment>
<comment type="interaction">
    <interactant intactId="EBI-2691397">
        <id>Q7Z4S6</id>
    </interactant>
    <interactant intactId="EBI-1044254">
        <id>Q9Y6D6</id>
        <label>ARFGEF1</label>
    </interactant>
    <organismsDiffer>false</organismsDiffer>
    <experiments>7</experiments>
</comment>
<comment type="interaction">
    <interactant intactId="EBI-2691397">
        <id>Q7Z4S6</id>
    </interactant>
    <interactant intactId="EBI-2556221">
        <id>Q14678</id>
        <label>KANK1</label>
    </interactant>
    <organismsDiffer>false</organismsDiffer>
    <experiments>5</experiments>
</comment>
<comment type="interaction">
    <interactant intactId="EBI-2691397">
        <id>Q7Z4S6</id>
    </interactant>
    <interactant intactId="EBI-6173812">
        <id>Q14678-2</id>
        <label>KANK1</label>
    </interactant>
    <organismsDiffer>false</organismsDiffer>
    <experiments>3</experiments>
</comment>
<comment type="interaction">
    <interactant intactId="EBI-6251716">
        <id>Q7Z4S6-2</id>
    </interactant>
    <interactant intactId="EBI-1044254">
        <id>Q9Y6D6</id>
        <label>ARFGEF1</label>
    </interactant>
    <organismsDiffer>false</organismsDiffer>
    <experiments>4</experiments>
</comment>
<comment type="subcellular location">
    <subcellularLocation>
        <location evidence="1">Cytoplasm</location>
        <location evidence="1">Cytoskeleton</location>
    </subcellularLocation>
    <subcellularLocation>
        <location evidence="9 11">Cytoplasm</location>
        <location evidence="9 11">Cell cortex</location>
    </subcellularLocation>
    <subcellularLocation>
        <location evidence="9">Cell projection</location>
        <location evidence="9">Axon</location>
    </subcellularLocation>
    <subcellularLocation>
        <location evidence="9">Cell projection</location>
        <location evidence="9">Dendrite</location>
    </subcellularLocation>
    <subcellularLocation>
        <location evidence="9">Cell projection</location>
        <location evidence="9">Growth cone</location>
    </subcellularLocation>
</comment>
<comment type="alternative products">
    <event type="alternative splicing"/>
    <isoform>
        <id>Q7Z4S6-1</id>
        <name>1</name>
        <sequence type="displayed"/>
    </isoform>
    <isoform>
        <id>Q7Z4S6-2</id>
        <name>2</name>
        <sequence type="described" ref="VSP_010870"/>
    </isoform>
    <isoform>
        <id>Q7Z4S6-3</id>
        <name>3</name>
        <sequence type="described" ref="VSP_010871"/>
    </isoform>
    <isoform>
        <id>Q7Z4S6-4</id>
        <name>4</name>
        <sequence type="described" ref="VSP_010872"/>
    </isoform>
    <isoform>
        <id>Q7Z4S6-5</id>
        <name>5</name>
        <sequence type="described" ref="VSP_010870 VSP_046791 VSP_046792"/>
    </isoform>
    <isoform>
        <id>Q7Z4S6-6</id>
        <name>6</name>
        <sequence type="described" ref="VSP_010870 VSP_046790 VSP_046792"/>
    </isoform>
</comment>
<comment type="domain">
    <text evidence="9">The coiled coil region interacts with the kinesin motor domain leading to autoinhibition of the motor.</text>
</comment>
<comment type="disease" evidence="5 6 7 8 9 10">
    <disease id="DI-00352">
        <name>Fibrosis of extraocular muscles, congenital, 1</name>
        <acronym>CFEOM1</acronym>
        <description>A congenital ocular motility disorder marked by restrictive ophthalmoplegia affecting extraocular muscles innervated by the oculomotor and/or trochlear nerves. It is clinically characterized by anchoring of the eyes in downward gaze, ptosis, and backward tilt of the head. Patients affected by congenital fibrosis of extraocular muscles type 1 show an absence of the superior division of the oculomotor nerve (cranial nerve III) and corresponding oculomotor subnuclei.</description>
        <dbReference type="MIM" id="135700"/>
    </disease>
    <text>The disease is caused by variants affecting the gene represented in this entry.</text>
</comment>
<comment type="similarity">
    <text evidence="3">Belongs to the TRAFAC class myosin-kinesin ATPase superfamily. Kinesin family.</text>
</comment>
<comment type="sequence caution" evidence="21">
    <conflict type="frameshift">
        <sequence resource="EMBL-CDS" id="AAD42883"/>
    </conflict>
</comment>
<comment type="sequence caution" evidence="21">
    <conflict type="miscellaneous discrepancy">
        <sequence resource="EMBL-CDS" id="AAH41430"/>
    </conflict>
    <text>Contaminating sequence. Potential poly-A sequence.</text>
</comment>
<comment type="sequence caution" evidence="21">
    <conflict type="frameshift">
        <sequence resource="EMBL-CDS" id="AAP97680"/>
    </conflict>
</comment>
<comment type="sequence caution" evidence="21">
    <conflict type="miscellaneous discrepancy">
        <sequence resource="EMBL-CDS" id="BAA90916"/>
    </conflict>
    <text>Contaminating sequence. Potential poly-A sequence.</text>
</comment>
<gene>
    <name type="primary">KIF21A</name>
    <name type="synonym">KIAA1708</name>
    <name type="synonym">KIF2</name>
</gene>
<sequence>MLGAPDESSVRVAVRIRPQLAKEKIEGCHICTSVTPGEPQVFLGKDKAFTFDYVFDIDSQQEQIYIQCIEKLIEGCFEGYNATVFAYGQTGAGKTYTMGTGFDVNIVEEELGIISRAVKHLFKSIEEKKHIAIKNGLPAPDFKVNAQFLELYNEEVLDLFDTTRDIDAKSKKSNIRIHEDSTGGIYTVGVTTRTVNTESEMMQCLKLGALSRTTASTQMNVQSSRSHAIFTIHVCQTRVCPQIDADNATDNKIISESAQMNEFETLTAKFHFVDLAGSERLKRTGATGERAKEGISINCGLLALGNVISALGDKSKRATHVPYRDSKLTRLLQDSLGGNSQTIMIACVSPSDRDFMETLNTLKYANRARNIKNKVMVNQDRASQQINALRSEITRLQMELMEYKTGKRIIDEEGVESINDMFHENAMLQTENNNLRVRIKAMQETVDALRSRITQLVSDQANHVLARAGEGNEEISNMIHSYIKEIEDLRAKLLESEAVNENLRKNLTRATARAPYFSGSSTFSPTILSSDKETIEIIDLAKKDLEKLKRKEKRKKKRLQKLEESNREERSVAGKEDNTDTDQEKKEEKGVSERENNELEVEESQEVSDHEDEEEEEEEEEDDIDGGESSDESDSESDEKANYQADLANITCEIAIKQKLIDELENSQKRLQTLKKQYEEKLMMLQHKIRDTQLERDQVLQNLGSVESYSEEKAKKVRSEYEKKLQAMNKELQRLQAAQKEHARLLKNQSQYEKQLKKLQQDVMEMKKTKVRLMKQMKEEQEKARLTESRRNREIAQLKKDQRKRDHQLRLLEAQKRNQEVVLRRKTEEVTALRRQVRPMSDKVAGKVTRKLSSSDAPAQDTGSSAAAVETDASRTGAQQKMRIPVARVQALPTPATNGNRKKYQRKGLTGRVFISKTARMKWQLLERRVTDIIMQKMTISNMEADMNRLLKQREELTKRREKLSKRREKIVKENGEGDKNVANINEEMESLTANIDYINDSISDCQANIMQMEEAKEEGETLDVTAVINACTLTEARYLLDHFLSMGINKGLQAAQKEAQIKVLEGRLKQTEITSATQNQLLFHMLKEKAELNPELDALLGHALQDLDSVPLENVEDSTDEDAPLNSPGSEGSTLSSDLMKLCGEVKPKNKARRRTTTQMELLYADSSELASDTSTGDASLPGPLTPVAEGQEIGMNTETSGTSAREKELSPPPGLPSKIGSISRQSSLSEKKIPEPSPVTRRKAYEKAEKSKAKEQKHSDSGTSEASLSPPSSPPSRPRNELNVFNRLTVSQGNTSVQQDKSDESDSSLSEVHRSSRRGIINPFPASKGIRAFPLQCIHIAEGHTKAVLCVDSTDDLLFTGSKDRTCKVWNLVTGQEIMSLGGHPNNVVSVKYCNYTSLVFTVSTSYIKVWDIRDSAKCIRTLTSSGQVTLGDACSASTSRTVAIPSGENQINQIALNPTGTFLYAASGNAVRMWDLKRFQSTGKLTGHLGPVMCLTVDQISSGQDLIITGSKDHYIKMFDVTEGALGTVSPTHNFEPPHYDGIEALTIQGDNLFSGSRDNGIKKWDLTQKDLLQQVPNAHKDWVCALGVVPDHPVLLSGCRGGILKVWNMDTFMPVGEMKGHDSPINAICVNSTHIFTAADDRTVRIWKARNLQDGQISDTGDLGEDIASN</sequence>
<organism>
    <name type="scientific">Homo sapiens</name>
    <name type="common">Human</name>
    <dbReference type="NCBI Taxonomy" id="9606"/>
    <lineage>
        <taxon>Eukaryota</taxon>
        <taxon>Metazoa</taxon>
        <taxon>Chordata</taxon>
        <taxon>Craniata</taxon>
        <taxon>Vertebrata</taxon>
        <taxon>Euteleostomi</taxon>
        <taxon>Mammalia</taxon>
        <taxon>Eutheria</taxon>
        <taxon>Euarchontoglires</taxon>
        <taxon>Primates</taxon>
        <taxon>Haplorrhini</taxon>
        <taxon>Catarrhini</taxon>
        <taxon>Hominidae</taxon>
        <taxon>Homo</taxon>
    </lineage>
</organism>
<protein>
    <recommendedName>
        <fullName>Kinesin-like protein KIF21A</fullName>
    </recommendedName>
    <alternativeName>
        <fullName>Kinesin-like protein KIF2</fullName>
    </alternativeName>
    <alternativeName>
        <fullName>Renal carcinoma antigen NY-REN-62</fullName>
    </alternativeName>
</protein>
<evidence type="ECO:0000250" key="1">
    <source>
        <dbReference type="UniProtKB" id="Q9QXL2"/>
    </source>
</evidence>
<evidence type="ECO:0000255" key="2"/>
<evidence type="ECO:0000255" key="3">
    <source>
        <dbReference type="PROSITE-ProRule" id="PRU00283"/>
    </source>
</evidence>
<evidence type="ECO:0000256" key="4">
    <source>
        <dbReference type="SAM" id="MobiDB-lite"/>
    </source>
</evidence>
<evidence type="ECO:0000269" key="5">
    <source>
    </source>
</evidence>
<evidence type="ECO:0000269" key="6">
    <source>
    </source>
</evidence>
<evidence type="ECO:0000269" key="7">
    <source>
    </source>
</evidence>
<evidence type="ECO:0000269" key="8">
    <source>
    </source>
</evidence>
<evidence type="ECO:0000269" key="9">
    <source>
    </source>
</evidence>
<evidence type="ECO:0000269" key="10">
    <source>
    </source>
</evidence>
<evidence type="ECO:0000269" key="11">
    <source>
    </source>
</evidence>
<evidence type="ECO:0000269" key="12">
    <source>
    </source>
</evidence>
<evidence type="ECO:0000303" key="13">
    <source>
    </source>
</evidence>
<evidence type="ECO:0000303" key="14">
    <source>
    </source>
</evidence>
<evidence type="ECO:0000303" key="15">
    <source>
    </source>
</evidence>
<evidence type="ECO:0000303" key="16">
    <source>
    </source>
</evidence>
<evidence type="ECO:0000303" key="17">
    <source>
    </source>
</evidence>
<evidence type="ECO:0000303" key="18">
    <source ref="2"/>
</evidence>
<evidence type="ECO:0000303" key="19">
    <source ref="3"/>
</evidence>
<evidence type="ECO:0000303" key="20">
    <source ref="4"/>
</evidence>
<evidence type="ECO:0000305" key="21"/>
<evidence type="ECO:0007744" key="22">
    <source>
    </source>
</evidence>
<evidence type="ECO:0007744" key="23">
    <source>
    </source>
</evidence>
<evidence type="ECO:0007744" key="24">
    <source>
    </source>
</evidence>
<evidence type="ECO:0007744" key="25">
    <source>
    </source>
</evidence>
<evidence type="ECO:0007744" key="26">
    <source>
    </source>
</evidence>
<evidence type="ECO:0007744" key="27">
    <source>
    </source>
</evidence>
<evidence type="ECO:0007829" key="28">
    <source>
        <dbReference type="PDB" id="5NFD"/>
    </source>
</evidence>
<evidence type="ECO:0007829" key="29">
    <source>
        <dbReference type="PDB" id="5YBU"/>
    </source>
</evidence>
<evidence type="ECO:0007829" key="30">
    <source>
        <dbReference type="PDB" id="7KLJ"/>
    </source>
</evidence>
<feature type="chain" id="PRO_0000125462" description="Kinesin-like protein KIF21A">
    <location>
        <begin position="1"/>
        <end position="1674"/>
    </location>
</feature>
<feature type="domain" description="Kinesin motor" evidence="3">
    <location>
        <begin position="9"/>
        <end position="371"/>
    </location>
</feature>
<feature type="repeat" description="WD 1">
    <location>
        <begin position="1345"/>
        <end position="1382"/>
    </location>
</feature>
<feature type="repeat" description="WD 2">
    <location>
        <begin position="1385"/>
        <end position="1423"/>
    </location>
</feature>
<feature type="repeat" description="WD 3">
    <location>
        <begin position="1449"/>
        <end position="1487"/>
    </location>
</feature>
<feature type="repeat" description="WD 4">
    <location>
        <begin position="1490"/>
        <end position="1532"/>
    </location>
</feature>
<feature type="repeat" description="WD 5">
    <location>
        <begin position="1541"/>
        <end position="1578"/>
    </location>
</feature>
<feature type="repeat" description="WD 6">
    <location>
        <begin position="1582"/>
        <end position="1621"/>
    </location>
</feature>
<feature type="repeat" description="WD 7">
    <location>
        <begin position="1624"/>
        <end position="1661"/>
    </location>
</feature>
<feature type="region of interest" description="Disordered" evidence="4">
    <location>
        <begin position="556"/>
        <end position="641"/>
    </location>
</feature>
<feature type="region of interest" description="Disordered" evidence="4">
    <location>
        <begin position="779"/>
        <end position="804"/>
    </location>
</feature>
<feature type="region of interest" description="Disordered" evidence="4">
    <location>
        <begin position="841"/>
        <end position="881"/>
    </location>
</feature>
<feature type="region of interest" description="Disordered" evidence="4">
    <location>
        <begin position="1116"/>
        <end position="1138"/>
    </location>
</feature>
<feature type="region of interest" description="Interaction with KANK1 and KANK2" evidence="9 12">
    <location>
        <begin position="1146"/>
        <end position="1167"/>
    </location>
</feature>
<feature type="region of interest" description="Disordered" evidence="4">
    <location>
        <begin position="1170"/>
        <end position="1318"/>
    </location>
</feature>
<feature type="coiled-coil region" evidence="2">
    <location>
        <begin position="365"/>
        <end position="575"/>
    </location>
</feature>
<feature type="coiled-coil region" evidence="2">
    <location>
        <begin position="931"/>
        <end position="1019"/>
    </location>
</feature>
<feature type="coiled-coil region" evidence="2">
    <location>
        <begin position="1053"/>
        <end position="1083"/>
    </location>
</feature>
<feature type="compositionally biased region" description="Basic and acidic residues" evidence="4">
    <location>
        <begin position="560"/>
        <end position="597"/>
    </location>
</feature>
<feature type="compositionally biased region" description="Acidic residues" evidence="4">
    <location>
        <begin position="598"/>
        <end position="637"/>
    </location>
</feature>
<feature type="compositionally biased region" description="Polar residues" evidence="4">
    <location>
        <begin position="851"/>
        <end position="865"/>
    </location>
</feature>
<feature type="compositionally biased region" description="Polar residues" evidence="4">
    <location>
        <begin position="1128"/>
        <end position="1138"/>
    </location>
</feature>
<feature type="compositionally biased region" description="Polar residues" evidence="4">
    <location>
        <begin position="1170"/>
        <end position="1179"/>
    </location>
</feature>
<feature type="compositionally biased region" description="Polar residues" evidence="4">
    <location>
        <begin position="1196"/>
        <end position="1205"/>
    </location>
</feature>
<feature type="compositionally biased region" description="Basic and acidic residues" evidence="4">
    <location>
        <begin position="1245"/>
        <end position="1262"/>
    </location>
</feature>
<feature type="compositionally biased region" description="Polar residues" evidence="4">
    <location>
        <begin position="1288"/>
        <end position="1297"/>
    </location>
</feature>
<feature type="binding site" evidence="3">
    <location>
        <begin position="88"/>
        <end position="95"/>
    </location>
    <ligand>
        <name>ATP</name>
        <dbReference type="ChEBI" id="CHEBI:30616"/>
    </ligand>
</feature>
<feature type="modified residue" description="N-acetylmethionine" evidence="25">
    <location>
        <position position="1"/>
    </location>
</feature>
<feature type="modified residue" description="Phosphoserine" evidence="23 26">
    <location>
        <position position="524"/>
    </location>
</feature>
<feature type="modified residue" description="Phosphoserine" evidence="22 23 24 26 27">
    <location>
        <position position="1212"/>
    </location>
</feature>
<feature type="modified residue" description="Phosphoserine" evidence="26">
    <location>
        <position position="1225"/>
    </location>
</feature>
<feature type="modified residue" description="Phosphoserine" evidence="26">
    <location>
        <position position="1229"/>
    </location>
</feature>
<feature type="modified residue" description="Phosphoserine" evidence="22 23 24 26">
    <location>
        <position position="1239"/>
    </location>
</feature>
<feature type="modified residue" description="Phosphoserine" evidence="23">
    <location>
        <position position="1662"/>
    </location>
</feature>
<feature type="modified residue" description="Phosphothreonine" evidence="23">
    <location>
        <position position="1664"/>
    </location>
</feature>
<feature type="modified residue" description="Phosphoserine" evidence="22 23">
    <location>
        <position position="1673"/>
    </location>
</feature>
<feature type="splice variant" id="VSP_010870" description="In isoform 2, isoform 5 and isoform 6." evidence="13 14 15 16 18 19 20">
    <location>
        <begin position="558"/>
        <end position="570"/>
    </location>
</feature>
<feature type="splice variant" id="VSP_046790" description="In isoform 6." evidence="18">
    <location>
        <begin position="807"/>
        <end position="829"/>
    </location>
</feature>
<feature type="splice variant" id="VSP_046791" description="In isoform 5." evidence="16">
    <location>
        <begin position="1107"/>
        <end position="1113"/>
    </location>
</feature>
<feature type="splice variant" id="VSP_010871" description="In isoform 3." evidence="17">
    <original>HSDSGTSEASLSPPSSPPSRPRNELNVFNRLTVSQGNTSVQQDKSDESDSSLSEVHRSSR</original>
    <variation>QSDESDSSLSEVH</variation>
    <location>
        <begin position="1260"/>
        <end position="1319"/>
    </location>
</feature>
<feature type="splice variant" id="VSP_046792" description="In isoform 5 and isoform 6." evidence="16 18">
    <location>
        <begin position="1304"/>
        <end position="1320"/>
    </location>
</feature>
<feature type="splice variant" id="VSP_010872" description="In isoform 4." evidence="16">
    <original>H</original>
    <variation>HS</variation>
    <location>
        <position position="1315"/>
    </location>
</feature>
<feature type="sequence variant" id="VAR_089555" description="In CFEOM1; prevents the interaction between the motor domain and the coiled-coil domain, expected to cause loss of autoinhibition and gain of function; dbSNP:rs864321718." evidence="8 9">
    <original>C</original>
    <variation>W</variation>
    <location>
        <position position="28"/>
    </location>
</feature>
<feature type="sequence variant" id="VAR_074031" description="In CFEOM1; de novo mutation." evidence="10">
    <original>D</original>
    <variation>E</variation>
    <location>
        <position position="352"/>
    </location>
</feature>
<feature type="sequence variant" id="VAR_019399" description="In CFEOM1; prevents the interaction between the motor domain and the coiled-coil domain expected to cause loss of autoinhibition and gain of function; dbSNP:rs121912588." evidence="5 7 9">
    <original>M</original>
    <variation>T</variation>
    <location>
        <position position="356"/>
    </location>
</feature>
<feature type="sequence variant" id="VAR_074032" description="In CFEOM1." evidence="7">
    <original>E</original>
    <variation>Q</variation>
    <location>
        <position position="944"/>
    </location>
</feature>
<feature type="sequence variant" id="VAR_019400" description="In CFEOM1; dbSNP:rs121912590." evidence="5">
    <original>M</original>
    <variation>R</variation>
    <location>
        <position position="947"/>
    </location>
</feature>
<feature type="sequence variant" id="VAR_027021" description="In CFEOM1." evidence="6">
    <original>M</original>
    <variation>T</variation>
    <location>
        <position position="947"/>
    </location>
</feature>
<feature type="sequence variant" id="VAR_019401" description="In CFEOM1; dbSNP:rs121912589." evidence="5">
    <original>M</original>
    <variation>V</variation>
    <location>
        <position position="947"/>
    </location>
</feature>
<feature type="sequence variant" id="VAR_074033" description="In CFEOM1." evidence="7">
    <original>R</original>
    <variation>L</variation>
    <location>
        <position position="954"/>
    </location>
</feature>
<feature type="sequence variant" id="VAR_019402" description="In CFEOM1; dbSNP:rs121912586." evidence="5 7 8">
    <original>R</original>
    <variation>Q</variation>
    <location>
        <position position="954"/>
    </location>
</feature>
<feature type="sequence variant" id="VAR_019403" description="In CFEOM1; enhances plus-end-directed motor activity due to loss of autoinhibition; gain of function; dbSNP:rs121912585." evidence="5 7 8 9">
    <original>R</original>
    <variation>W</variation>
    <location>
        <position position="954"/>
    </location>
</feature>
<feature type="sequence variant" id="VAR_074034" description="In CFEOM1." evidence="7">
    <original>A</original>
    <variation>P</variation>
    <location>
        <position position="1008"/>
    </location>
</feature>
<feature type="sequence variant" id="VAR_019404" description="In CFEOM1; dbSNP:rs121912587." evidence="5">
    <original>I</original>
    <variation>T</variation>
    <location>
        <position position="1010"/>
    </location>
</feature>
<feature type="mutagenesis site" description="Very weak binding affinity for KANK1 and KANK2." evidence="12">
    <original>R</original>
    <variation>A</variation>
    <location>
        <position position="1154"/>
    </location>
</feature>
<feature type="mutagenesis site" description="Does not bind to KANK1 or KANK2." evidence="12">
    <original>L</original>
    <variation>A</variation>
    <location>
        <position position="1164"/>
    </location>
</feature>
<feature type="sequence conflict" description="In Ref. 2; CAJ45483." evidence="21" ref="2">
    <original>K</original>
    <variation>R</variation>
    <location>
        <position position="172"/>
    </location>
</feature>
<feature type="sequence conflict" description="In Ref. 2; CAJ45483." evidence="21" ref="2">
    <original>R</original>
    <variation>G</variation>
    <location>
        <position position="176"/>
    </location>
</feature>
<feature type="sequence conflict" description="In Ref. 2; CAJ45483." evidence="21" ref="2">
    <original>A</original>
    <variation>G</variation>
    <location>
        <position position="215"/>
    </location>
</feature>
<feature type="sequence conflict" description="In Ref. 2; CAJ45483." evidence="21" ref="2">
    <original>S</original>
    <variation>C</variation>
    <location>
        <position position="315"/>
    </location>
</feature>
<feature type="sequence conflict" description="In Ref. 3; AAP97680 and 8; AAD42883." evidence="21" ref="3 8">
    <original>NN</original>
    <variation>TQ</variation>
    <location>
        <begin position="596"/>
        <end position="597"/>
    </location>
</feature>
<feature type="sequence conflict" description="In Ref. 3; AAP97680." evidence="21" ref="3">
    <original>E</original>
    <variation>D</variation>
    <location>
        <position position="653"/>
    </location>
</feature>
<feature type="sequence conflict" description="In Ref. 3; AAP97680." evidence="21" ref="3">
    <original>DQ</original>
    <variation>AP</variation>
    <location>
        <begin position="801"/>
        <end position="802"/>
    </location>
</feature>
<feature type="sequence conflict" description="In Ref. 2; CAJ45483." evidence="21" ref="2">
    <original>D</original>
    <variation>G</variation>
    <location>
        <position position="801"/>
    </location>
</feature>
<feature type="sequence conflict" description="In Ref. 3; AAP97680." evidence="21" ref="3">
    <original>E</original>
    <variation>G</variation>
    <location>
        <position position="813"/>
    </location>
</feature>
<feature type="sequence conflict" description="In Ref. 3; AAP97680." evidence="21" ref="3">
    <original>K</original>
    <variation>Q</variation>
    <location>
        <position position="826"/>
    </location>
</feature>
<feature type="sequence conflict" description="In Ref. 2; CAJ45483." evidence="21" ref="2">
    <original>R</original>
    <variation>G</variation>
    <location>
        <position position="875"/>
    </location>
</feature>
<feature type="sequence conflict" description="In Ref. 2; CAJ45483." evidence="21" ref="2">
    <original>L</original>
    <variation>S</variation>
    <location>
        <position position="892"/>
    </location>
</feature>
<feature type="sequence conflict" description="In Ref. 2; CAJ45483." evidence="21" ref="2">
    <original>Q</original>
    <variation>R</variation>
    <location>
        <position position="1071"/>
    </location>
</feature>
<feature type="sequence conflict" description="In Ref. 2; CAJ45483." evidence="21" ref="2">
    <original>D</original>
    <variation>G</variation>
    <location>
        <position position="1167"/>
    </location>
</feature>
<feature type="sequence conflict" description="In Ref. 7; AAI36415." evidence="21" ref="7">
    <original>E</original>
    <variation>D</variation>
    <location>
        <position position="1237"/>
    </location>
</feature>
<feature type="sequence conflict" description="In Ref. 2; CAJ45483." evidence="21" ref="2">
    <original>H</original>
    <variation>N</variation>
    <location>
        <position position="1341"/>
    </location>
</feature>
<feature type="sequence conflict" description="In Ref. 2; CAJ45483." evidence="21" ref="2">
    <original>QE</original>
    <variation>HR</variation>
    <location>
        <begin position="1378"/>
        <end position="1379"/>
    </location>
</feature>
<feature type="sequence conflict" description="In Ref. 2; CAJ45483." evidence="21" ref="2">
    <original>G</original>
    <variation>A</variation>
    <location>
        <position position="1429"/>
    </location>
</feature>
<feature type="sequence conflict" description="In Ref. 11; CAD97863." evidence="21" ref="11">
    <original>I</original>
    <variation>T</variation>
    <location>
        <position position="1503"/>
    </location>
</feature>
<feature type="sequence conflict" description="In Ref. 11; CAD97863." evidence="21" ref="11">
    <original>I</original>
    <variation>T</variation>
    <location>
        <position position="1511"/>
    </location>
</feature>
<feature type="helix" evidence="28">
    <location>
        <begin position="939"/>
        <end position="973"/>
    </location>
</feature>
<feature type="helix" evidence="28">
    <location>
        <begin position="982"/>
        <end position="1014"/>
    </location>
</feature>
<feature type="helix" evidence="29">
    <location>
        <begin position="1153"/>
        <end position="1155"/>
    </location>
</feature>
<feature type="helix" evidence="29">
    <location>
        <begin position="1160"/>
        <end position="1164"/>
    </location>
</feature>
<feature type="strand" evidence="30">
    <location>
        <begin position="1338"/>
        <end position="1344"/>
    </location>
</feature>
<feature type="strand" evidence="30">
    <location>
        <begin position="1350"/>
        <end position="1355"/>
    </location>
</feature>
<feature type="strand" evidence="30">
    <location>
        <begin position="1357"/>
        <end position="1364"/>
    </location>
</feature>
<feature type="strand" evidence="30">
    <location>
        <begin position="1369"/>
        <end position="1373"/>
    </location>
</feature>
<feature type="turn" evidence="30">
    <location>
        <begin position="1374"/>
        <end position="1376"/>
    </location>
</feature>
<feature type="strand" evidence="30">
    <location>
        <begin position="1379"/>
        <end position="1383"/>
    </location>
</feature>
<feature type="strand" evidence="30">
    <location>
        <begin position="1392"/>
        <end position="1396"/>
    </location>
</feature>
<feature type="turn" evidence="30">
    <location>
        <begin position="1397"/>
        <end position="1400"/>
    </location>
</feature>
<feature type="strand" evidence="30">
    <location>
        <begin position="1401"/>
        <end position="1406"/>
    </location>
</feature>
<feature type="strand" evidence="30">
    <location>
        <begin position="1409"/>
        <end position="1414"/>
    </location>
</feature>
<feature type="strand" evidence="30">
    <location>
        <begin position="1416"/>
        <end position="1418"/>
    </location>
</feature>
<feature type="strand" evidence="30">
    <location>
        <begin position="1420"/>
        <end position="1426"/>
    </location>
</feature>
<feature type="strand" evidence="30">
    <location>
        <begin position="1431"/>
        <end position="1434"/>
    </location>
</feature>
<feature type="strand" evidence="30">
    <location>
        <begin position="1454"/>
        <end position="1459"/>
    </location>
</feature>
<feature type="strand" evidence="30">
    <location>
        <begin position="1463"/>
        <end position="1470"/>
    </location>
</feature>
<feature type="strand" evidence="30">
    <location>
        <begin position="1473"/>
        <end position="1478"/>
    </location>
</feature>
<feature type="turn" evidence="30">
    <location>
        <begin position="1479"/>
        <end position="1482"/>
    </location>
</feature>
<feature type="strand" evidence="30">
    <location>
        <begin position="1483"/>
        <end position="1488"/>
    </location>
</feature>
<feature type="strand" evidence="30">
    <location>
        <begin position="1495"/>
        <end position="1504"/>
    </location>
</feature>
<feature type="strand" evidence="30">
    <location>
        <begin position="1507"/>
        <end position="1514"/>
    </location>
</feature>
<feature type="strand" evidence="30">
    <location>
        <begin position="1519"/>
        <end position="1525"/>
    </location>
</feature>
<feature type="strand" evidence="30">
    <location>
        <begin position="1530"/>
        <end position="1532"/>
    </location>
</feature>
<feature type="strand" evidence="30">
    <location>
        <begin position="1535"/>
        <end position="1537"/>
    </location>
</feature>
<feature type="strand" evidence="30">
    <location>
        <begin position="1546"/>
        <end position="1552"/>
    </location>
</feature>
<feature type="strand" evidence="30">
    <location>
        <begin position="1555"/>
        <end position="1560"/>
    </location>
</feature>
<feature type="strand" evidence="30">
    <location>
        <begin position="1565"/>
        <end position="1569"/>
    </location>
</feature>
<feature type="turn" evidence="30">
    <location>
        <begin position="1570"/>
        <end position="1573"/>
    </location>
</feature>
<feature type="strand" evidence="30">
    <location>
        <begin position="1574"/>
        <end position="1579"/>
    </location>
</feature>
<feature type="strand" evidence="30">
    <location>
        <begin position="1582"/>
        <end position="1585"/>
    </location>
</feature>
<feature type="strand" evidence="30">
    <location>
        <begin position="1587"/>
        <end position="1592"/>
    </location>
</feature>
<feature type="strand" evidence="30">
    <location>
        <begin position="1596"/>
        <end position="1603"/>
    </location>
</feature>
<feature type="strand" evidence="30">
    <location>
        <begin position="1606"/>
        <end position="1612"/>
    </location>
</feature>
<feature type="turn" evidence="30">
    <location>
        <begin position="1613"/>
        <end position="1615"/>
    </location>
</feature>
<feature type="strand" evidence="30">
    <location>
        <begin position="1618"/>
        <end position="1623"/>
    </location>
</feature>
<feature type="strand" evidence="30">
    <location>
        <begin position="1629"/>
        <end position="1634"/>
    </location>
</feature>
<feature type="strand" evidence="30">
    <location>
        <begin position="1639"/>
        <end position="1643"/>
    </location>
</feature>
<feature type="strand" evidence="30">
    <location>
        <begin position="1646"/>
        <end position="1652"/>
    </location>
</feature>